<evidence type="ECO:0000255" key="1">
    <source>
        <dbReference type="HAMAP-Rule" id="MF_00003"/>
    </source>
</evidence>
<evidence type="ECO:0000256" key="2">
    <source>
        <dbReference type="SAM" id="MobiDB-lite"/>
    </source>
</evidence>
<reference key="1">
    <citation type="journal article" date="2001" name="Proc. Natl. Acad. Sci. U.S.A.">
        <title>Genome sequence of an industrial microorganism Streptomyces avermitilis: deducing the ability of producing secondary metabolites.</title>
        <authorList>
            <person name="Omura S."/>
            <person name="Ikeda H."/>
            <person name="Ishikawa J."/>
            <person name="Hanamoto A."/>
            <person name="Takahashi C."/>
            <person name="Shinose M."/>
            <person name="Takahashi Y."/>
            <person name="Horikawa H."/>
            <person name="Nakazawa H."/>
            <person name="Osonoe T."/>
            <person name="Kikuchi H."/>
            <person name="Shiba T."/>
            <person name="Sakaki Y."/>
            <person name="Hattori M."/>
        </authorList>
    </citation>
    <scope>NUCLEOTIDE SEQUENCE [LARGE SCALE GENOMIC DNA]</scope>
    <source>
        <strain>ATCC 31267 / DSM 46492 / JCM 5070 / NBRC 14893 / NCIMB 12804 / NRRL 8165 / MA-4680</strain>
    </source>
</reference>
<reference key="2">
    <citation type="journal article" date="2003" name="Nat. Biotechnol.">
        <title>Complete genome sequence and comparative analysis of the industrial microorganism Streptomyces avermitilis.</title>
        <authorList>
            <person name="Ikeda H."/>
            <person name="Ishikawa J."/>
            <person name="Hanamoto A."/>
            <person name="Shinose M."/>
            <person name="Kikuchi H."/>
            <person name="Shiba T."/>
            <person name="Sakaki Y."/>
            <person name="Hattori M."/>
            <person name="Omura S."/>
        </authorList>
    </citation>
    <scope>NUCLEOTIDE SEQUENCE [LARGE SCALE GENOMIC DNA]</scope>
    <source>
        <strain>ATCC 31267 / DSM 46492 / JCM 5070 / NBRC 14893 / NCIMB 12804 / NRRL 8165 / MA-4680</strain>
    </source>
</reference>
<name>RBFA_STRAW</name>
<organism>
    <name type="scientific">Streptomyces avermitilis (strain ATCC 31267 / DSM 46492 / JCM 5070 / NBRC 14893 / NCIMB 12804 / NRRL 8165 / MA-4680)</name>
    <dbReference type="NCBI Taxonomy" id="227882"/>
    <lineage>
        <taxon>Bacteria</taxon>
        <taxon>Bacillati</taxon>
        <taxon>Actinomycetota</taxon>
        <taxon>Actinomycetes</taxon>
        <taxon>Kitasatosporales</taxon>
        <taxon>Streptomycetaceae</taxon>
        <taxon>Streptomyces</taxon>
    </lineage>
</organism>
<dbReference type="EMBL" id="BA000030">
    <property type="protein sequence ID" value="BAC70260.1"/>
    <property type="molecule type" value="Genomic_DNA"/>
</dbReference>
<dbReference type="RefSeq" id="WP_010983985.1">
    <property type="nucleotide sequence ID" value="NZ_JZJK01000064.1"/>
</dbReference>
<dbReference type="SMR" id="Q82K55"/>
<dbReference type="GeneID" id="41539637"/>
<dbReference type="KEGG" id="sma:SAVERM_2549"/>
<dbReference type="eggNOG" id="COG0858">
    <property type="taxonomic scope" value="Bacteria"/>
</dbReference>
<dbReference type="HOGENOM" id="CLU_089475_0_0_11"/>
<dbReference type="OrthoDB" id="307788at2"/>
<dbReference type="Proteomes" id="UP000000428">
    <property type="component" value="Chromosome"/>
</dbReference>
<dbReference type="GO" id="GO:0005829">
    <property type="term" value="C:cytosol"/>
    <property type="evidence" value="ECO:0007669"/>
    <property type="project" value="TreeGrafter"/>
</dbReference>
<dbReference type="GO" id="GO:0043024">
    <property type="term" value="F:ribosomal small subunit binding"/>
    <property type="evidence" value="ECO:0007669"/>
    <property type="project" value="TreeGrafter"/>
</dbReference>
<dbReference type="GO" id="GO:0030490">
    <property type="term" value="P:maturation of SSU-rRNA"/>
    <property type="evidence" value="ECO:0007669"/>
    <property type="project" value="UniProtKB-UniRule"/>
</dbReference>
<dbReference type="FunFam" id="3.30.300.20:FF:000018">
    <property type="entry name" value="Ribosome-binding factor A"/>
    <property type="match status" value="1"/>
</dbReference>
<dbReference type="Gene3D" id="3.30.300.20">
    <property type="match status" value="1"/>
</dbReference>
<dbReference type="HAMAP" id="MF_00003">
    <property type="entry name" value="RbfA"/>
    <property type="match status" value="1"/>
</dbReference>
<dbReference type="InterPro" id="IPR015946">
    <property type="entry name" value="KH_dom-like_a/b"/>
</dbReference>
<dbReference type="InterPro" id="IPR000238">
    <property type="entry name" value="RbfA"/>
</dbReference>
<dbReference type="InterPro" id="IPR023799">
    <property type="entry name" value="RbfA_dom_sf"/>
</dbReference>
<dbReference type="InterPro" id="IPR020053">
    <property type="entry name" value="Ribosome-bd_factorA_CS"/>
</dbReference>
<dbReference type="NCBIfam" id="TIGR00082">
    <property type="entry name" value="rbfA"/>
    <property type="match status" value="1"/>
</dbReference>
<dbReference type="PANTHER" id="PTHR33515">
    <property type="entry name" value="RIBOSOME-BINDING FACTOR A, CHLOROPLASTIC-RELATED"/>
    <property type="match status" value="1"/>
</dbReference>
<dbReference type="PANTHER" id="PTHR33515:SF1">
    <property type="entry name" value="RIBOSOME-BINDING FACTOR A, CHLOROPLASTIC-RELATED"/>
    <property type="match status" value="1"/>
</dbReference>
<dbReference type="Pfam" id="PF02033">
    <property type="entry name" value="RBFA"/>
    <property type="match status" value="1"/>
</dbReference>
<dbReference type="SUPFAM" id="SSF89919">
    <property type="entry name" value="Ribosome-binding factor A, RbfA"/>
    <property type="match status" value="1"/>
</dbReference>
<dbReference type="PROSITE" id="PS01319">
    <property type="entry name" value="RBFA"/>
    <property type="match status" value="1"/>
</dbReference>
<protein>
    <recommendedName>
        <fullName evidence="1">Ribosome-binding factor A</fullName>
    </recommendedName>
</protein>
<accession>Q82K55</accession>
<proteinExistence type="inferred from homology"/>
<sequence length="157" mass="16544">MADNARAKRLADLIREVVAQKLQRGIKDPRLGSQVTITDTRVTGDLREATVFYTVYGDDEERAAAAAGLESAKGVLRSAVGAAAGVKFTPTLTFVADALPDTAKTIEDLLDKARASDAKVREVSAGAQFAGDADPYRKPESDDESDTAAKTDGDAAE</sequence>
<keyword id="KW-0963">Cytoplasm</keyword>
<keyword id="KW-1185">Reference proteome</keyword>
<keyword id="KW-0690">Ribosome biogenesis</keyword>
<gene>
    <name evidence="1" type="primary">rbfA</name>
    <name type="ordered locus">SAV_2549</name>
</gene>
<comment type="function">
    <text evidence="1">One of several proteins that assist in the late maturation steps of the functional core of the 30S ribosomal subunit. Associates with free 30S ribosomal subunits (but not with 30S subunits that are part of 70S ribosomes or polysomes). Required for efficient processing of 16S rRNA. May interact with the 5'-terminal helix region of 16S rRNA.</text>
</comment>
<comment type="subunit">
    <text evidence="1">Monomer. Binds 30S ribosomal subunits, but not 50S ribosomal subunits or 70S ribosomes.</text>
</comment>
<comment type="subcellular location">
    <subcellularLocation>
        <location evidence="1">Cytoplasm</location>
    </subcellularLocation>
</comment>
<comment type="similarity">
    <text evidence="1">Belongs to the RbfA family.</text>
</comment>
<feature type="chain" id="PRO_0000102742" description="Ribosome-binding factor A">
    <location>
        <begin position="1"/>
        <end position="157"/>
    </location>
</feature>
<feature type="region of interest" description="Disordered" evidence="2">
    <location>
        <begin position="124"/>
        <end position="157"/>
    </location>
</feature>
<feature type="compositionally biased region" description="Basic and acidic residues" evidence="2">
    <location>
        <begin position="147"/>
        <end position="157"/>
    </location>
</feature>